<sequence>MGNADERRFEVLRAIVADFVATKEPIGSRALVERHNLGVSSATIRNDMAVLEAEGYITQPHTSSGRVPTEKGYREFVDRLEDVKPLSAAERRAIQSFLESGVDLDDVLRRAVRLLAQLTCQVAVVQYPTLSTSTVRHLEVIALSPARLLMVVITESGRVDQRIAELGDVIDDYQLSQLREMLSQAMGGKKLSAASAAVADLVGRFRGTGGLANAVGRSANVLLESLVEHTEERLLLGGTANLTRNSADFGGSLRSILEALEEQVVVLRLLAAQQEAGKVTVRIGHETAAEQIMGTSMVSTAYGTSGTVYGGMGVLGPTRMDYPGTIASVAAVALYIGEVLGAR</sequence>
<comment type="function">
    <text evidence="1">Negative regulator of class I heat shock genes (grpE-dnaK-dnaJ and groELS operons). Prevents heat-shock induction of these operons.</text>
</comment>
<comment type="similarity">
    <text evidence="1">Belongs to the HrcA family.</text>
</comment>
<comment type="sequence caution" evidence="2">
    <conflict type="frameshift">
        <sequence resource="EMBL-CDS" id="AAA17179"/>
    </conflict>
</comment>
<dbReference type="EMBL" id="U00016">
    <property type="protein sequence ID" value="AAA17153.1"/>
    <property type="status" value="ALT_FRAME"/>
    <property type="molecule type" value="Genomic_DNA"/>
</dbReference>
<dbReference type="EMBL" id="U00016">
    <property type="protein sequence ID" value="AAA17179.1"/>
    <property type="status" value="ALT_FRAME"/>
    <property type="molecule type" value="Genomic_DNA"/>
</dbReference>
<dbReference type="EMBL" id="AL583919">
    <property type="protein sequence ID" value="CAC30132.1"/>
    <property type="molecule type" value="Genomic_DNA"/>
</dbReference>
<dbReference type="PIR" id="H86986">
    <property type="entry name" value="H86986"/>
</dbReference>
<dbReference type="PIR" id="S72585">
    <property type="entry name" value="S72585"/>
</dbReference>
<dbReference type="PIR" id="S72611">
    <property type="entry name" value="S72611"/>
</dbReference>
<dbReference type="RefSeq" id="NP_301517.1">
    <property type="nucleotide sequence ID" value="NC_002677.1"/>
</dbReference>
<dbReference type="RefSeq" id="WP_010907841.1">
    <property type="nucleotide sequence ID" value="NC_002677.1"/>
</dbReference>
<dbReference type="SMR" id="Q9CCN2"/>
<dbReference type="STRING" id="272631.gene:17574445"/>
<dbReference type="KEGG" id="mle:ML0624"/>
<dbReference type="PATRIC" id="fig|272631.5.peg.1105"/>
<dbReference type="Leproma" id="ML0624"/>
<dbReference type="eggNOG" id="COG1420">
    <property type="taxonomic scope" value="Bacteria"/>
</dbReference>
<dbReference type="HOGENOM" id="CLU_050019_2_0_11"/>
<dbReference type="OrthoDB" id="9783139at2"/>
<dbReference type="Proteomes" id="UP000000806">
    <property type="component" value="Chromosome"/>
</dbReference>
<dbReference type="GO" id="GO:0003677">
    <property type="term" value="F:DNA binding"/>
    <property type="evidence" value="ECO:0007669"/>
    <property type="project" value="InterPro"/>
</dbReference>
<dbReference type="GO" id="GO:0045892">
    <property type="term" value="P:negative regulation of DNA-templated transcription"/>
    <property type="evidence" value="ECO:0007669"/>
    <property type="project" value="UniProtKB-UniRule"/>
</dbReference>
<dbReference type="FunFam" id="1.10.10.10:FF:000049">
    <property type="entry name" value="Heat-inducible transcription repressor HrcA"/>
    <property type="match status" value="1"/>
</dbReference>
<dbReference type="Gene3D" id="3.30.450.40">
    <property type="match status" value="1"/>
</dbReference>
<dbReference type="Gene3D" id="3.30.390.60">
    <property type="entry name" value="Heat-inducible transcription repressor hrca homolog, domain 3"/>
    <property type="match status" value="1"/>
</dbReference>
<dbReference type="Gene3D" id="1.10.10.10">
    <property type="entry name" value="Winged helix-like DNA-binding domain superfamily/Winged helix DNA-binding domain"/>
    <property type="match status" value="1"/>
</dbReference>
<dbReference type="HAMAP" id="MF_00081">
    <property type="entry name" value="HrcA"/>
    <property type="match status" value="1"/>
</dbReference>
<dbReference type="InterPro" id="IPR029016">
    <property type="entry name" value="GAF-like_dom_sf"/>
</dbReference>
<dbReference type="InterPro" id="IPR002571">
    <property type="entry name" value="HrcA"/>
</dbReference>
<dbReference type="InterPro" id="IPR021153">
    <property type="entry name" value="HrcA_C"/>
</dbReference>
<dbReference type="InterPro" id="IPR036388">
    <property type="entry name" value="WH-like_DNA-bd_sf"/>
</dbReference>
<dbReference type="InterPro" id="IPR036390">
    <property type="entry name" value="WH_DNA-bd_sf"/>
</dbReference>
<dbReference type="InterPro" id="IPR023120">
    <property type="entry name" value="WHTH_transcript_rep_HrcA_IDD"/>
</dbReference>
<dbReference type="NCBIfam" id="TIGR00331">
    <property type="entry name" value="hrcA"/>
    <property type="match status" value="1"/>
</dbReference>
<dbReference type="PANTHER" id="PTHR34824">
    <property type="entry name" value="HEAT-INDUCIBLE TRANSCRIPTION REPRESSOR HRCA"/>
    <property type="match status" value="1"/>
</dbReference>
<dbReference type="PANTHER" id="PTHR34824:SF1">
    <property type="entry name" value="HEAT-INDUCIBLE TRANSCRIPTION REPRESSOR HRCA"/>
    <property type="match status" value="1"/>
</dbReference>
<dbReference type="Pfam" id="PF01628">
    <property type="entry name" value="HrcA"/>
    <property type="match status" value="1"/>
</dbReference>
<dbReference type="PIRSF" id="PIRSF005485">
    <property type="entry name" value="HrcA"/>
    <property type="match status" value="1"/>
</dbReference>
<dbReference type="SUPFAM" id="SSF55781">
    <property type="entry name" value="GAF domain-like"/>
    <property type="match status" value="1"/>
</dbReference>
<dbReference type="SUPFAM" id="SSF46785">
    <property type="entry name" value="Winged helix' DNA-binding domain"/>
    <property type="match status" value="1"/>
</dbReference>
<proteinExistence type="inferred from homology"/>
<keyword id="KW-1185">Reference proteome</keyword>
<keyword id="KW-0678">Repressor</keyword>
<keyword id="KW-0346">Stress response</keyword>
<keyword id="KW-0804">Transcription</keyword>
<keyword id="KW-0805">Transcription regulation</keyword>
<reference key="1">
    <citation type="submission" date="1994-03" db="EMBL/GenBank/DDBJ databases">
        <authorList>
            <person name="Smith D.R."/>
            <person name="Robison K."/>
        </authorList>
    </citation>
    <scope>NUCLEOTIDE SEQUENCE [GENOMIC DNA]</scope>
</reference>
<reference key="2">
    <citation type="journal article" date="2001" name="Nature">
        <title>Massive gene decay in the leprosy bacillus.</title>
        <authorList>
            <person name="Cole S.T."/>
            <person name="Eiglmeier K."/>
            <person name="Parkhill J."/>
            <person name="James K.D."/>
            <person name="Thomson N.R."/>
            <person name="Wheeler P.R."/>
            <person name="Honore N."/>
            <person name="Garnier T."/>
            <person name="Churcher C.M."/>
            <person name="Harris D.E."/>
            <person name="Mungall K.L."/>
            <person name="Basham D."/>
            <person name="Brown D."/>
            <person name="Chillingworth T."/>
            <person name="Connor R."/>
            <person name="Davies R.M."/>
            <person name="Devlin K."/>
            <person name="Duthoy S."/>
            <person name="Feltwell T."/>
            <person name="Fraser A."/>
            <person name="Hamlin N."/>
            <person name="Holroyd S."/>
            <person name="Hornsby T."/>
            <person name="Jagels K."/>
            <person name="Lacroix C."/>
            <person name="Maclean J."/>
            <person name="Moule S."/>
            <person name="Murphy L.D."/>
            <person name="Oliver K."/>
            <person name="Quail M.A."/>
            <person name="Rajandream M.A."/>
            <person name="Rutherford K.M."/>
            <person name="Rutter S."/>
            <person name="Seeger K."/>
            <person name="Simon S."/>
            <person name="Simmonds M."/>
            <person name="Skelton J."/>
            <person name="Squares R."/>
            <person name="Squares S."/>
            <person name="Stevens K."/>
            <person name="Taylor K."/>
            <person name="Whitehead S."/>
            <person name="Woodward J.R."/>
            <person name="Barrell B.G."/>
        </authorList>
    </citation>
    <scope>NUCLEOTIDE SEQUENCE [LARGE SCALE GENOMIC DNA]</scope>
    <source>
        <strain>TN</strain>
    </source>
</reference>
<protein>
    <recommendedName>
        <fullName evidence="1">Heat-inducible transcription repressor HrcA</fullName>
    </recommendedName>
</protein>
<name>HRCA_MYCLE</name>
<evidence type="ECO:0000255" key="1">
    <source>
        <dbReference type="HAMAP-Rule" id="MF_00081"/>
    </source>
</evidence>
<evidence type="ECO:0000305" key="2"/>
<gene>
    <name evidence="1" type="primary">hrcA</name>
    <name type="ordered locus">ML0624</name>
    <name type="ORF">B1937_F1_18/B1937_F3_95</name>
</gene>
<accession>Q9CCN2</accession>
<accession>Q49749</accession>
<accession>Q49772</accession>
<feature type="chain" id="PRO_0000182505" description="Heat-inducible transcription repressor HrcA">
    <location>
        <begin position="1"/>
        <end position="343"/>
    </location>
</feature>
<organism>
    <name type="scientific">Mycobacterium leprae (strain TN)</name>
    <dbReference type="NCBI Taxonomy" id="272631"/>
    <lineage>
        <taxon>Bacteria</taxon>
        <taxon>Bacillati</taxon>
        <taxon>Actinomycetota</taxon>
        <taxon>Actinomycetes</taxon>
        <taxon>Mycobacteriales</taxon>
        <taxon>Mycobacteriaceae</taxon>
        <taxon>Mycobacterium</taxon>
    </lineage>
</organism>